<protein>
    <recommendedName>
        <fullName>Single-stranded DNA-binding protein 2</fullName>
    </recommendedName>
    <alternativeName>
        <fullName>Sequence-specific single-stranded-DNA-binding protein 2</fullName>
    </alternativeName>
</protein>
<organism>
    <name type="scientific">Homo sapiens</name>
    <name type="common">Human</name>
    <dbReference type="NCBI Taxonomy" id="9606"/>
    <lineage>
        <taxon>Eukaryota</taxon>
        <taxon>Metazoa</taxon>
        <taxon>Chordata</taxon>
        <taxon>Craniata</taxon>
        <taxon>Vertebrata</taxon>
        <taxon>Euteleostomi</taxon>
        <taxon>Mammalia</taxon>
        <taxon>Eutheria</taxon>
        <taxon>Euarchontoglires</taxon>
        <taxon>Primates</taxon>
        <taxon>Haplorrhini</taxon>
        <taxon>Catarrhini</taxon>
        <taxon>Hominidae</taxon>
        <taxon>Homo</taxon>
    </lineage>
</organism>
<sequence>MYGKGKSNSSAVPSDSQAREKLALYVYEYLLHVGAQKSAQTFLSEIRWEKNITLGEPPGFLHSWWCVFWDLYCAAPERRETCEHSSEAKAFHDYSAAAAPSPVLGNIPPGDGMPVGPVPPGFFQPFMSPRYPGGPRPPLRIPNQALGGVPGSQPLLPSGMDPTRQQGHPNMGGPMQRMTPPRGMVPLGPQNYGGAMRPPLNALGGPGMPGMNMGPGGGRPWPNPTNANSIPYSSASPGNYVGPPGGGGPPGTPIMPSPADSTNSGDNMYTLMNAVPPGPNRPNFPMGPGSDGPMGGLGGMESHHMNGSLGSGDMDSISKNSPNNMSLSNQPGTPRDDGEMGGNFLNPFQSESYSPSMTMSV</sequence>
<accession>P81877</accession>
<accession>B2R5W1</accession>
<accession>B7Z1J2</accession>
<accession>B7Z2L9</accession>
<accession>B7Z665</accession>
<accession>D6RH18</accession>
<accession>E9PB74</accession>
<accession>E9PDA8</accession>
<accession>Q8N2Q2</accession>
<accession>Q9BWW6</accession>
<accession>Q9Y4T7</accession>
<comment type="interaction">
    <interactant intactId="EBI-748077">
        <id>P81877</id>
    </interactant>
    <interactant intactId="EBI-677177">
        <id>Q86U70</id>
        <label>LDB1</label>
    </interactant>
    <organismsDiffer>false</organismsDiffer>
    <experiments>3</experiments>
</comment>
<comment type="subcellular location">
    <subcellularLocation>
        <location evidence="1">Nucleus</location>
    </subcellularLocation>
</comment>
<comment type="alternative products">
    <event type="alternative splicing"/>
    <isoform>
        <id>P81877-1</id>
        <name>1</name>
        <sequence type="displayed"/>
    </isoform>
    <isoform>
        <id>P81877-2</id>
        <name>2</name>
        <sequence type="described" ref="VSP_044744 VSP_044745"/>
    </isoform>
    <isoform>
        <id>P81877-3</id>
        <name>3</name>
        <sequence type="described" ref="VSP_045117"/>
    </isoform>
    <isoform>
        <id>P81877-4</id>
        <name>4</name>
        <sequence type="described" ref="VSP_044744"/>
    </isoform>
    <isoform>
        <id>P81877-5</id>
        <name>5</name>
        <sequence type="described" ref="VSP_044744 VSP_045580"/>
    </isoform>
</comment>
<comment type="tissue specificity">
    <text evidence="5">Ubiquitous.</text>
</comment>
<feature type="chain" id="PRO_0000123826" description="Single-stranded DNA-binding protein 2">
    <location>
        <begin position="1"/>
        <end position="361"/>
    </location>
</feature>
<feature type="domain" description="LisH" evidence="3">
    <location>
        <begin position="18"/>
        <end position="50"/>
    </location>
</feature>
<feature type="region of interest" description="Disordered" evidence="4">
    <location>
        <begin position="147"/>
        <end position="171"/>
    </location>
</feature>
<feature type="region of interest" description="Disordered" evidence="4">
    <location>
        <begin position="194"/>
        <end position="361"/>
    </location>
</feature>
<feature type="compositionally biased region" description="Gly residues" evidence="4">
    <location>
        <begin position="204"/>
        <end position="219"/>
    </location>
</feature>
<feature type="compositionally biased region" description="Polar residues" evidence="4">
    <location>
        <begin position="225"/>
        <end position="236"/>
    </location>
</feature>
<feature type="compositionally biased region" description="Pro residues" evidence="4">
    <location>
        <begin position="246"/>
        <end position="256"/>
    </location>
</feature>
<feature type="compositionally biased region" description="Gly residues" evidence="4">
    <location>
        <begin position="289"/>
        <end position="299"/>
    </location>
</feature>
<feature type="compositionally biased region" description="Polar residues" evidence="4">
    <location>
        <begin position="317"/>
        <end position="332"/>
    </location>
</feature>
<feature type="compositionally biased region" description="Polar residues" evidence="4">
    <location>
        <begin position="346"/>
        <end position="361"/>
    </location>
</feature>
<feature type="modified residue" description="N6-acetyllysine" evidence="2">
    <location>
        <position position="6"/>
    </location>
</feature>
<feature type="modified residue" description="Phosphoserine" evidence="9 10">
    <location>
        <position position="321"/>
    </location>
</feature>
<feature type="modified residue" description="Phosphothreonine" evidence="9 10">
    <location>
        <position position="333"/>
    </location>
</feature>
<feature type="splice variant" id="VSP_044744" description="In isoform 2, isoform 4 and isoform 5." evidence="6 7">
    <location>
        <begin position="95"/>
        <end position="124"/>
    </location>
</feature>
<feature type="splice variant" id="VSP_045117" description="In isoform 3." evidence="6">
    <location>
        <begin position="124"/>
        <end position="143"/>
    </location>
</feature>
<feature type="splice variant" id="VSP_045580" description="In isoform 5." evidence="6">
    <original>P</original>
    <variation>PQSDPWLSL</variation>
    <location>
        <position position="189"/>
    </location>
</feature>
<feature type="splice variant" id="VSP_044745" description="In isoform 2." evidence="6">
    <location>
        <begin position="320"/>
        <end position="352"/>
    </location>
</feature>
<feature type="sequence conflict" description="In Ref. 5; CR936787." evidence="8" ref="5">
    <original>A</original>
    <variation>V</variation>
    <location>
        <position position="23"/>
    </location>
</feature>
<feature type="sequence conflict" description="In Ref. 3; CAB45699." evidence="8" ref="3">
    <original>S</original>
    <variation>R</variation>
    <location>
        <position position="158"/>
    </location>
</feature>
<feature type="sequence conflict" description="In Ref. 2; AAD27781." evidence="8" ref="2">
    <original>MTPPRGMVPLGP</original>
    <variation>NDSSKRNGCLRTTVLTPGLSL</variation>
    <location>
        <begin position="178"/>
        <end position="189"/>
    </location>
</feature>
<feature type="sequence conflict" description="In Ref. 4; BAH11905." evidence="8" ref="4">
    <original>M</original>
    <variation>V</variation>
    <location>
        <position position="255"/>
    </location>
</feature>
<feature type="sequence conflict" description="In Ref. 4; BAC11046." evidence="8" ref="4">
    <original>N</original>
    <variation>D</variation>
    <location>
        <position position="306"/>
    </location>
</feature>
<feature type="sequence conflict" description="In Ref. 4; BAH13151." evidence="8" ref="4">
    <original>N</original>
    <variation>S</variation>
    <location>
        <position position="346"/>
    </location>
</feature>
<feature type="helix" evidence="11">
    <location>
        <begin position="16"/>
        <end position="32"/>
    </location>
</feature>
<feature type="helix" evidence="11">
    <location>
        <begin position="36"/>
        <end position="45"/>
    </location>
</feature>
<feature type="strand" evidence="11">
    <location>
        <begin position="56"/>
        <end position="58"/>
    </location>
</feature>
<feature type="helix" evidence="11">
    <location>
        <begin position="60"/>
        <end position="73"/>
    </location>
</feature>
<feature type="turn" evidence="12">
    <location>
        <begin position="76"/>
        <end position="78"/>
    </location>
</feature>
<feature type="helix" evidence="12">
    <location>
        <begin position="86"/>
        <end position="92"/>
    </location>
</feature>
<reference key="1">
    <citation type="journal article" date="2002" name="Genomics">
        <title>A novel, evolutionarily conserved gene family with putative sequence-specific single-stranded DNA-binding activity.</title>
        <authorList>
            <person name="Castro P.D."/>
            <person name="Liang H."/>
            <person name="Liang J.C."/>
            <person name="Nagarajan L."/>
        </authorList>
    </citation>
    <scope>NUCLEOTIDE SEQUENCE [GENOMIC DNA]</scope>
    <scope>TISSUE SPECIFICITY</scope>
</reference>
<reference key="2">
    <citation type="journal article" date="2000" name="Proc. Natl. Acad. Sci. U.S.A.">
        <title>Gene expression profiling in the human hypothalamus-pituitary-adrenal axis and full-length cDNA cloning.</title>
        <authorList>
            <person name="Hu R.-M."/>
            <person name="Han Z.-G."/>
            <person name="Song H.-D."/>
            <person name="Peng Y.-D."/>
            <person name="Huang Q.-H."/>
            <person name="Ren S.-X."/>
            <person name="Gu Y.-J."/>
            <person name="Huang C.-H."/>
            <person name="Li Y.-B."/>
            <person name="Jiang C.-L."/>
            <person name="Fu G."/>
            <person name="Zhang Q.-H."/>
            <person name="Gu B.-W."/>
            <person name="Dai M."/>
            <person name="Mao Y.-F."/>
            <person name="Gao G.-F."/>
            <person name="Rong R."/>
            <person name="Ye M."/>
            <person name="Zhou J."/>
            <person name="Xu S.-H."/>
            <person name="Gu J."/>
            <person name="Shi J.-X."/>
            <person name="Jin W.-R."/>
            <person name="Zhang C.-K."/>
            <person name="Wu T.-M."/>
            <person name="Huang G.-Y."/>
            <person name="Chen Z."/>
            <person name="Chen M.-D."/>
            <person name="Chen J.-L."/>
        </authorList>
    </citation>
    <scope>NUCLEOTIDE SEQUENCE [LARGE SCALE MRNA] (ISOFORM 1)</scope>
    <source>
        <tissue>Pituitary</tissue>
    </source>
</reference>
<reference key="3">
    <citation type="journal article" date="2001" name="Genome Res.">
        <title>Towards a catalog of human genes and proteins: sequencing and analysis of 500 novel complete protein coding human cDNAs.</title>
        <authorList>
            <person name="Wiemann S."/>
            <person name="Weil B."/>
            <person name="Wellenreuther R."/>
            <person name="Gassenhuber J."/>
            <person name="Glassl S."/>
            <person name="Ansorge W."/>
            <person name="Boecher M."/>
            <person name="Bloecker H."/>
            <person name="Bauersachs S."/>
            <person name="Blum H."/>
            <person name="Lauber J."/>
            <person name="Duesterhoeft A."/>
            <person name="Beyer A."/>
            <person name="Koehrer K."/>
            <person name="Strack N."/>
            <person name="Mewes H.-W."/>
            <person name="Ottenwaelder B."/>
            <person name="Obermaier B."/>
            <person name="Tampe J."/>
            <person name="Heubner D."/>
            <person name="Wambutt R."/>
            <person name="Korn B."/>
            <person name="Klein M."/>
            <person name="Poustka A."/>
        </authorList>
    </citation>
    <scope>NUCLEOTIDE SEQUENCE [LARGE SCALE MRNA] (ISOFORM 1)</scope>
    <source>
        <tissue>Brain</tissue>
    </source>
</reference>
<reference key="4">
    <citation type="journal article" date="2004" name="Nat. Genet.">
        <title>Complete sequencing and characterization of 21,243 full-length human cDNAs.</title>
        <authorList>
            <person name="Ota T."/>
            <person name="Suzuki Y."/>
            <person name="Nishikawa T."/>
            <person name="Otsuki T."/>
            <person name="Sugiyama T."/>
            <person name="Irie R."/>
            <person name="Wakamatsu A."/>
            <person name="Hayashi K."/>
            <person name="Sato H."/>
            <person name="Nagai K."/>
            <person name="Kimura K."/>
            <person name="Makita H."/>
            <person name="Sekine M."/>
            <person name="Obayashi M."/>
            <person name="Nishi T."/>
            <person name="Shibahara T."/>
            <person name="Tanaka T."/>
            <person name="Ishii S."/>
            <person name="Yamamoto J."/>
            <person name="Saito K."/>
            <person name="Kawai Y."/>
            <person name="Isono Y."/>
            <person name="Nakamura Y."/>
            <person name="Nagahari K."/>
            <person name="Murakami K."/>
            <person name="Yasuda T."/>
            <person name="Iwayanagi T."/>
            <person name="Wagatsuma M."/>
            <person name="Shiratori A."/>
            <person name="Sudo H."/>
            <person name="Hosoiri T."/>
            <person name="Kaku Y."/>
            <person name="Kodaira H."/>
            <person name="Kondo H."/>
            <person name="Sugawara M."/>
            <person name="Takahashi M."/>
            <person name="Kanda K."/>
            <person name="Yokoi T."/>
            <person name="Furuya T."/>
            <person name="Kikkawa E."/>
            <person name="Omura Y."/>
            <person name="Abe K."/>
            <person name="Kamihara K."/>
            <person name="Katsuta N."/>
            <person name="Sato K."/>
            <person name="Tanikawa M."/>
            <person name="Yamazaki M."/>
            <person name="Ninomiya K."/>
            <person name="Ishibashi T."/>
            <person name="Yamashita H."/>
            <person name="Murakawa K."/>
            <person name="Fujimori K."/>
            <person name="Tanai H."/>
            <person name="Kimata M."/>
            <person name="Watanabe M."/>
            <person name="Hiraoka S."/>
            <person name="Chiba Y."/>
            <person name="Ishida S."/>
            <person name="Ono Y."/>
            <person name="Takiguchi S."/>
            <person name="Watanabe S."/>
            <person name="Yosida M."/>
            <person name="Hotuta T."/>
            <person name="Kusano J."/>
            <person name="Kanehori K."/>
            <person name="Takahashi-Fujii A."/>
            <person name="Hara H."/>
            <person name="Tanase T.-O."/>
            <person name="Nomura Y."/>
            <person name="Togiya S."/>
            <person name="Komai F."/>
            <person name="Hara R."/>
            <person name="Takeuchi K."/>
            <person name="Arita M."/>
            <person name="Imose N."/>
            <person name="Musashino K."/>
            <person name="Yuuki H."/>
            <person name="Oshima A."/>
            <person name="Sasaki N."/>
            <person name="Aotsuka S."/>
            <person name="Yoshikawa Y."/>
            <person name="Matsunawa H."/>
            <person name="Ichihara T."/>
            <person name="Shiohata N."/>
            <person name="Sano S."/>
            <person name="Moriya S."/>
            <person name="Momiyama H."/>
            <person name="Satoh N."/>
            <person name="Takami S."/>
            <person name="Terashima Y."/>
            <person name="Suzuki O."/>
            <person name="Nakagawa S."/>
            <person name="Senoh A."/>
            <person name="Mizoguchi H."/>
            <person name="Goto Y."/>
            <person name="Shimizu F."/>
            <person name="Wakebe H."/>
            <person name="Hishigaki H."/>
            <person name="Watanabe T."/>
            <person name="Sugiyama A."/>
            <person name="Takemoto M."/>
            <person name="Kawakami B."/>
            <person name="Yamazaki M."/>
            <person name="Watanabe K."/>
            <person name="Kumagai A."/>
            <person name="Itakura S."/>
            <person name="Fukuzumi Y."/>
            <person name="Fujimori Y."/>
            <person name="Komiyama M."/>
            <person name="Tashiro H."/>
            <person name="Tanigami A."/>
            <person name="Fujiwara T."/>
            <person name="Ono T."/>
            <person name="Yamada K."/>
            <person name="Fujii Y."/>
            <person name="Ozaki K."/>
            <person name="Hirao M."/>
            <person name="Ohmori Y."/>
            <person name="Kawabata A."/>
            <person name="Hikiji T."/>
            <person name="Kobatake N."/>
            <person name="Inagaki H."/>
            <person name="Ikema Y."/>
            <person name="Okamoto S."/>
            <person name="Okitani R."/>
            <person name="Kawakami T."/>
            <person name="Noguchi S."/>
            <person name="Itoh T."/>
            <person name="Shigeta K."/>
            <person name="Senba T."/>
            <person name="Matsumura K."/>
            <person name="Nakajima Y."/>
            <person name="Mizuno T."/>
            <person name="Morinaga M."/>
            <person name="Sasaki M."/>
            <person name="Togashi T."/>
            <person name="Oyama M."/>
            <person name="Hata H."/>
            <person name="Watanabe M."/>
            <person name="Komatsu T."/>
            <person name="Mizushima-Sugano J."/>
            <person name="Satoh T."/>
            <person name="Shirai Y."/>
            <person name="Takahashi Y."/>
            <person name="Nakagawa K."/>
            <person name="Okumura K."/>
            <person name="Nagase T."/>
            <person name="Nomura N."/>
            <person name="Kikuchi H."/>
            <person name="Masuho Y."/>
            <person name="Yamashita R."/>
            <person name="Nakai K."/>
            <person name="Yada T."/>
            <person name="Nakamura Y."/>
            <person name="Ohara O."/>
            <person name="Isogai T."/>
            <person name="Sugano S."/>
        </authorList>
    </citation>
    <scope>NUCLEOTIDE SEQUENCE [LARGE SCALE MRNA] (ISOFORMS 1; 2; 3 AND 5)</scope>
    <source>
        <tissue>Brain</tissue>
        <tissue>Cerebellum</tissue>
        <tissue>Embryo</tissue>
    </source>
</reference>
<reference key="5">
    <citation type="journal article" date="2007" name="BMC Genomics">
        <title>The full-ORF clone resource of the German cDNA consortium.</title>
        <authorList>
            <person name="Bechtel S."/>
            <person name="Rosenfelder H."/>
            <person name="Duda A."/>
            <person name="Schmidt C.P."/>
            <person name="Ernst U."/>
            <person name="Wellenreuther R."/>
            <person name="Mehrle A."/>
            <person name="Schuster C."/>
            <person name="Bahr A."/>
            <person name="Bloecker H."/>
            <person name="Heubner D."/>
            <person name="Hoerlein A."/>
            <person name="Michel G."/>
            <person name="Wedler H."/>
            <person name="Koehrer K."/>
            <person name="Ottenwaelder B."/>
            <person name="Poustka A."/>
            <person name="Wiemann S."/>
            <person name="Schupp I."/>
        </authorList>
    </citation>
    <scope>NUCLEOTIDE SEQUENCE [LARGE SCALE MRNA] (ISOFORM 4)</scope>
    <source>
        <tissue>Cerebellum</tissue>
    </source>
</reference>
<reference key="6">
    <citation type="journal article" date="2004" name="Nature">
        <title>The DNA sequence and comparative analysis of human chromosome 5.</title>
        <authorList>
            <person name="Schmutz J."/>
            <person name="Martin J."/>
            <person name="Terry A."/>
            <person name="Couronne O."/>
            <person name="Grimwood J."/>
            <person name="Lowry S."/>
            <person name="Gordon L.A."/>
            <person name="Scott D."/>
            <person name="Xie G."/>
            <person name="Huang W."/>
            <person name="Hellsten U."/>
            <person name="Tran-Gyamfi M."/>
            <person name="She X."/>
            <person name="Prabhakar S."/>
            <person name="Aerts A."/>
            <person name="Altherr M."/>
            <person name="Bajorek E."/>
            <person name="Black S."/>
            <person name="Branscomb E."/>
            <person name="Caoile C."/>
            <person name="Challacombe J.F."/>
            <person name="Chan Y.M."/>
            <person name="Denys M."/>
            <person name="Detter J.C."/>
            <person name="Escobar J."/>
            <person name="Flowers D."/>
            <person name="Fotopulos D."/>
            <person name="Glavina T."/>
            <person name="Gomez M."/>
            <person name="Gonzales E."/>
            <person name="Goodstein D."/>
            <person name="Grigoriev I."/>
            <person name="Groza M."/>
            <person name="Hammon N."/>
            <person name="Hawkins T."/>
            <person name="Haydu L."/>
            <person name="Israni S."/>
            <person name="Jett J."/>
            <person name="Kadner K."/>
            <person name="Kimball H."/>
            <person name="Kobayashi A."/>
            <person name="Lopez F."/>
            <person name="Lou Y."/>
            <person name="Martinez D."/>
            <person name="Medina C."/>
            <person name="Morgan J."/>
            <person name="Nandkeshwar R."/>
            <person name="Noonan J.P."/>
            <person name="Pitluck S."/>
            <person name="Pollard M."/>
            <person name="Predki P."/>
            <person name="Priest J."/>
            <person name="Ramirez L."/>
            <person name="Retterer J."/>
            <person name="Rodriguez A."/>
            <person name="Rogers S."/>
            <person name="Salamov A."/>
            <person name="Salazar A."/>
            <person name="Thayer N."/>
            <person name="Tice H."/>
            <person name="Tsai M."/>
            <person name="Ustaszewska A."/>
            <person name="Vo N."/>
            <person name="Wheeler J."/>
            <person name="Wu K."/>
            <person name="Yang J."/>
            <person name="Dickson M."/>
            <person name="Cheng J.-F."/>
            <person name="Eichler E.E."/>
            <person name="Olsen A."/>
            <person name="Pennacchio L.A."/>
            <person name="Rokhsar D.S."/>
            <person name="Richardson P."/>
            <person name="Lucas S.M."/>
            <person name="Myers R.M."/>
            <person name="Rubin E.M."/>
        </authorList>
    </citation>
    <scope>NUCLEOTIDE SEQUENCE [LARGE SCALE GENOMIC DNA]</scope>
</reference>
<reference key="7">
    <citation type="submission" date="2005-07" db="EMBL/GenBank/DDBJ databases">
        <authorList>
            <person name="Mural R.J."/>
            <person name="Istrail S."/>
            <person name="Sutton G.G."/>
            <person name="Florea L."/>
            <person name="Halpern A.L."/>
            <person name="Mobarry C.M."/>
            <person name="Lippert R."/>
            <person name="Walenz B."/>
            <person name="Shatkay H."/>
            <person name="Dew I."/>
            <person name="Miller J.R."/>
            <person name="Flanigan M.J."/>
            <person name="Edwards N.J."/>
            <person name="Bolanos R."/>
            <person name="Fasulo D."/>
            <person name="Halldorsson B.V."/>
            <person name="Hannenhalli S."/>
            <person name="Turner R."/>
            <person name="Yooseph S."/>
            <person name="Lu F."/>
            <person name="Nusskern D.R."/>
            <person name="Shue B.C."/>
            <person name="Zheng X.H."/>
            <person name="Zhong F."/>
            <person name="Delcher A.L."/>
            <person name="Huson D.H."/>
            <person name="Kravitz S.A."/>
            <person name="Mouchard L."/>
            <person name="Reinert K."/>
            <person name="Remington K.A."/>
            <person name="Clark A.G."/>
            <person name="Waterman M.S."/>
            <person name="Eichler E.E."/>
            <person name="Adams M.D."/>
            <person name="Hunkapiller M.W."/>
            <person name="Myers E.W."/>
            <person name="Venter J.C."/>
        </authorList>
    </citation>
    <scope>NUCLEOTIDE SEQUENCE [LARGE SCALE GENOMIC DNA]</scope>
</reference>
<reference key="8">
    <citation type="journal article" date="2004" name="Genome Res.">
        <title>The status, quality, and expansion of the NIH full-length cDNA project: the Mammalian Gene Collection (MGC).</title>
        <authorList>
            <consortium name="The MGC Project Team"/>
        </authorList>
    </citation>
    <scope>NUCLEOTIDE SEQUENCE [LARGE SCALE MRNA] (ISOFORM 1)</scope>
    <source>
        <tissue>Uterus</tissue>
    </source>
</reference>
<reference key="9">
    <citation type="journal article" date="2009" name="Sci. Signal.">
        <title>Quantitative phosphoproteomic analysis of T cell receptor signaling reveals system-wide modulation of protein-protein interactions.</title>
        <authorList>
            <person name="Mayya V."/>
            <person name="Lundgren D.H."/>
            <person name="Hwang S.-I."/>
            <person name="Rezaul K."/>
            <person name="Wu L."/>
            <person name="Eng J.K."/>
            <person name="Rodionov V."/>
            <person name="Han D.K."/>
        </authorList>
    </citation>
    <scope>PHOSPHORYLATION [LARGE SCALE ANALYSIS] AT SER-321 AND THR-333</scope>
    <scope>IDENTIFICATION BY MASS SPECTROMETRY [LARGE SCALE ANALYSIS]</scope>
    <source>
        <tissue>Leukemic T-cell</tissue>
    </source>
</reference>
<reference key="10">
    <citation type="journal article" date="2011" name="BMC Syst. Biol.">
        <title>Initial characterization of the human central proteome.</title>
        <authorList>
            <person name="Burkard T.R."/>
            <person name="Planyavsky M."/>
            <person name="Kaupe I."/>
            <person name="Breitwieser F.P."/>
            <person name="Buerckstuemmer T."/>
            <person name="Bennett K.L."/>
            <person name="Superti-Furga G."/>
            <person name="Colinge J."/>
        </authorList>
    </citation>
    <scope>IDENTIFICATION BY MASS SPECTROMETRY [LARGE SCALE ANALYSIS]</scope>
</reference>
<reference key="11">
    <citation type="journal article" date="2012" name="Proc. Natl. Acad. Sci. U.S.A.">
        <title>N-terminal acetylome analyses and functional insights of the N-terminal acetyltransferase NatB.</title>
        <authorList>
            <person name="Van Damme P."/>
            <person name="Lasa M."/>
            <person name="Polevoda B."/>
            <person name="Gazquez C."/>
            <person name="Elosegui-Artola A."/>
            <person name="Kim D.S."/>
            <person name="De Juan-Pardo E."/>
            <person name="Demeyer K."/>
            <person name="Hole K."/>
            <person name="Larrea E."/>
            <person name="Timmerman E."/>
            <person name="Prieto J."/>
            <person name="Arnesen T."/>
            <person name="Sherman F."/>
            <person name="Gevaert K."/>
            <person name="Aldabe R."/>
        </authorList>
    </citation>
    <scope>IDENTIFICATION BY MASS SPECTROMETRY [LARGE SCALE ANALYSIS]</scope>
</reference>
<reference key="12">
    <citation type="journal article" date="2013" name="J. Proteome Res.">
        <title>Toward a comprehensive characterization of a human cancer cell phosphoproteome.</title>
        <authorList>
            <person name="Zhou H."/>
            <person name="Di Palma S."/>
            <person name="Preisinger C."/>
            <person name="Peng M."/>
            <person name="Polat A.N."/>
            <person name="Heck A.J."/>
            <person name="Mohammed S."/>
        </authorList>
    </citation>
    <scope>PHOSPHORYLATION [LARGE SCALE ANALYSIS] AT SER-321 AND THR-333</scope>
    <scope>IDENTIFICATION BY MASS SPECTROMETRY [LARGE SCALE ANALYSIS]</scope>
    <source>
        <tissue>Erythroleukemia</tissue>
    </source>
</reference>
<keyword id="KW-0002">3D-structure</keyword>
<keyword id="KW-0007">Acetylation</keyword>
<keyword id="KW-0025">Alternative splicing</keyword>
<keyword id="KW-0238">DNA-binding</keyword>
<keyword id="KW-0539">Nucleus</keyword>
<keyword id="KW-0597">Phosphoprotein</keyword>
<keyword id="KW-1267">Proteomics identification</keyword>
<keyword id="KW-1185">Reference proteome</keyword>
<name>SSBP2_HUMAN</name>
<gene>
    <name type="primary">SSBP2</name>
    <name type="synonym">SSDP2</name>
</gene>
<evidence type="ECO:0000250" key="1"/>
<evidence type="ECO:0000250" key="2">
    <source>
        <dbReference type="UniProtKB" id="Q9CYZ8"/>
    </source>
</evidence>
<evidence type="ECO:0000255" key="3">
    <source>
        <dbReference type="PROSITE-ProRule" id="PRU00126"/>
    </source>
</evidence>
<evidence type="ECO:0000256" key="4">
    <source>
        <dbReference type="SAM" id="MobiDB-lite"/>
    </source>
</evidence>
<evidence type="ECO:0000269" key="5">
    <source>
    </source>
</evidence>
<evidence type="ECO:0000303" key="6">
    <source>
    </source>
</evidence>
<evidence type="ECO:0000303" key="7">
    <source>
    </source>
</evidence>
<evidence type="ECO:0000305" key="8"/>
<evidence type="ECO:0007744" key="9">
    <source>
    </source>
</evidence>
<evidence type="ECO:0007744" key="10">
    <source>
    </source>
</evidence>
<evidence type="ECO:0007829" key="11">
    <source>
        <dbReference type="PDB" id="6IWV"/>
    </source>
</evidence>
<evidence type="ECO:0007829" key="12">
    <source>
        <dbReference type="PDB" id="8HIB"/>
    </source>
</evidence>
<dbReference type="EMBL" id="AY026275">
    <property type="protein sequence ID" value="AAK15803.1"/>
    <property type="molecule type" value="Genomic_DNA"/>
</dbReference>
<dbReference type="EMBL" id="AY026259">
    <property type="protein sequence ID" value="AAK15803.1"/>
    <property type="status" value="JOINED"/>
    <property type="molecule type" value="Genomic_DNA"/>
</dbReference>
<dbReference type="EMBL" id="AY026260">
    <property type="protein sequence ID" value="AAK15803.1"/>
    <property type="status" value="JOINED"/>
    <property type="molecule type" value="Genomic_DNA"/>
</dbReference>
<dbReference type="EMBL" id="AY026261">
    <property type="protein sequence ID" value="AAK15803.1"/>
    <property type="status" value="JOINED"/>
    <property type="molecule type" value="Genomic_DNA"/>
</dbReference>
<dbReference type="EMBL" id="AY026262">
    <property type="protein sequence ID" value="AAK15803.1"/>
    <property type="status" value="JOINED"/>
    <property type="molecule type" value="Genomic_DNA"/>
</dbReference>
<dbReference type="EMBL" id="AY026263">
    <property type="protein sequence ID" value="AAK15803.1"/>
    <property type="status" value="JOINED"/>
    <property type="molecule type" value="Genomic_DNA"/>
</dbReference>
<dbReference type="EMBL" id="AY026264">
    <property type="protein sequence ID" value="AAK15803.1"/>
    <property type="status" value="JOINED"/>
    <property type="molecule type" value="Genomic_DNA"/>
</dbReference>
<dbReference type="EMBL" id="AY026265">
    <property type="protein sequence ID" value="AAK15803.1"/>
    <property type="status" value="JOINED"/>
    <property type="molecule type" value="Genomic_DNA"/>
</dbReference>
<dbReference type="EMBL" id="AY026266">
    <property type="protein sequence ID" value="AAK15803.1"/>
    <property type="status" value="JOINED"/>
    <property type="molecule type" value="Genomic_DNA"/>
</dbReference>
<dbReference type="EMBL" id="AY026267">
    <property type="protein sequence ID" value="AAK15803.1"/>
    <property type="status" value="JOINED"/>
    <property type="molecule type" value="Genomic_DNA"/>
</dbReference>
<dbReference type="EMBL" id="AY026268">
    <property type="protein sequence ID" value="AAK15803.1"/>
    <property type="status" value="JOINED"/>
    <property type="molecule type" value="Genomic_DNA"/>
</dbReference>
<dbReference type="EMBL" id="AY026269">
    <property type="protein sequence ID" value="AAK15803.1"/>
    <property type="status" value="JOINED"/>
    <property type="molecule type" value="Genomic_DNA"/>
</dbReference>
<dbReference type="EMBL" id="AY026270">
    <property type="protein sequence ID" value="AAK15803.1"/>
    <property type="status" value="JOINED"/>
    <property type="molecule type" value="Genomic_DNA"/>
</dbReference>
<dbReference type="EMBL" id="AY026271">
    <property type="protein sequence ID" value="AAK15803.1"/>
    <property type="status" value="JOINED"/>
    <property type="molecule type" value="Genomic_DNA"/>
</dbReference>
<dbReference type="EMBL" id="AY026272">
    <property type="protein sequence ID" value="AAK15803.1"/>
    <property type="status" value="JOINED"/>
    <property type="molecule type" value="Genomic_DNA"/>
</dbReference>
<dbReference type="EMBL" id="AY026273">
    <property type="protein sequence ID" value="AAK15803.1"/>
    <property type="status" value="JOINED"/>
    <property type="molecule type" value="Genomic_DNA"/>
</dbReference>
<dbReference type="EMBL" id="AY026274">
    <property type="protein sequence ID" value="AAK15803.1"/>
    <property type="status" value="JOINED"/>
    <property type="molecule type" value="Genomic_DNA"/>
</dbReference>
<dbReference type="EMBL" id="AF077048">
    <property type="protein sequence ID" value="AAD27781.1"/>
    <property type="molecule type" value="mRNA"/>
</dbReference>
<dbReference type="EMBL" id="AL080076">
    <property type="protein sequence ID" value="CAB45699.1"/>
    <property type="molecule type" value="mRNA"/>
</dbReference>
<dbReference type="EMBL" id="AK074537">
    <property type="protein sequence ID" value="BAC11046.1"/>
    <property type="molecule type" value="mRNA"/>
</dbReference>
<dbReference type="EMBL" id="AK293544">
    <property type="protein sequence ID" value="BAH11528.1"/>
    <property type="molecule type" value="mRNA"/>
</dbReference>
<dbReference type="EMBL" id="AK294864">
    <property type="protein sequence ID" value="BAH11905.1"/>
    <property type="molecule type" value="mRNA"/>
</dbReference>
<dbReference type="EMBL" id="AK299858">
    <property type="protein sequence ID" value="BAH13151.1"/>
    <property type="molecule type" value="mRNA"/>
</dbReference>
<dbReference type="EMBL" id="AK312337">
    <property type="protein sequence ID" value="BAG35258.1"/>
    <property type="molecule type" value="mRNA"/>
</dbReference>
<dbReference type="EMBL" id="CR936787">
    <property type="status" value="NOT_ANNOTATED_CDS"/>
    <property type="molecule type" value="mRNA"/>
</dbReference>
<dbReference type="EMBL" id="AC010623">
    <property type="status" value="NOT_ANNOTATED_CDS"/>
    <property type="molecule type" value="Genomic_DNA"/>
</dbReference>
<dbReference type="EMBL" id="AC016562">
    <property type="status" value="NOT_ANNOTATED_CDS"/>
    <property type="molecule type" value="Genomic_DNA"/>
</dbReference>
<dbReference type="EMBL" id="AC026419">
    <property type="status" value="NOT_ANNOTATED_CDS"/>
    <property type="molecule type" value="Genomic_DNA"/>
</dbReference>
<dbReference type="EMBL" id="AC093250">
    <property type="status" value="NOT_ANNOTATED_CDS"/>
    <property type="molecule type" value="Genomic_DNA"/>
</dbReference>
<dbReference type="EMBL" id="CH471084">
    <property type="protein sequence ID" value="EAW95879.1"/>
    <property type="molecule type" value="Genomic_DNA"/>
</dbReference>
<dbReference type="EMBL" id="BC017020">
    <property type="protein sequence ID" value="AAH17020.1"/>
    <property type="molecule type" value="mRNA"/>
</dbReference>
<dbReference type="CCDS" id="CCDS4056.1">
    <molecule id="P81877-1"/>
</dbReference>
<dbReference type="CCDS" id="CCDS58960.1">
    <molecule id="P81877-2"/>
</dbReference>
<dbReference type="CCDS" id="CCDS58961.1">
    <molecule id="P81877-4"/>
</dbReference>
<dbReference type="CCDS" id="CCDS58962.1">
    <molecule id="P81877-5"/>
</dbReference>
<dbReference type="CCDS" id="CCDS58963.1">
    <molecule id="P81877-3"/>
</dbReference>
<dbReference type="PIR" id="T12470">
    <property type="entry name" value="T12470"/>
</dbReference>
<dbReference type="RefSeq" id="NP_001243661.1">
    <property type="nucleotide sequence ID" value="NM_001256732.2"/>
</dbReference>
<dbReference type="RefSeq" id="NP_001243662.1">
    <molecule id="P81877-3"/>
    <property type="nucleotide sequence ID" value="NM_001256733.3"/>
</dbReference>
<dbReference type="RefSeq" id="NP_001243663.1">
    <molecule id="P81877-5"/>
    <property type="nucleotide sequence ID" value="NM_001256734.3"/>
</dbReference>
<dbReference type="RefSeq" id="NP_001243664.1">
    <molecule id="P81877-4"/>
    <property type="nucleotide sequence ID" value="NM_001256735.3"/>
</dbReference>
<dbReference type="RefSeq" id="NP_001243665.1">
    <molecule id="P81877-2"/>
    <property type="nucleotide sequence ID" value="NM_001256736.3"/>
</dbReference>
<dbReference type="RefSeq" id="NP_001387271.1">
    <molecule id="P81877-1"/>
    <property type="nucleotide sequence ID" value="NM_001400342.1"/>
</dbReference>
<dbReference type="RefSeq" id="NP_036578.2">
    <molecule id="P81877-1"/>
    <property type="nucleotide sequence ID" value="NM_012446.4"/>
</dbReference>
<dbReference type="PDB" id="6IWV">
    <property type="method" value="X-ray"/>
    <property type="resolution" value="1.52 A"/>
    <property type="chains" value="A/B=10-77"/>
</dbReference>
<dbReference type="PDB" id="6TYD">
    <property type="method" value="X-ray"/>
    <property type="resolution" value="2.80 A"/>
    <property type="chains" value="A/B=1-94"/>
</dbReference>
<dbReference type="PDB" id="8HIB">
    <property type="method" value="X-ray"/>
    <property type="resolution" value="2.45 A"/>
    <property type="chains" value="A/B=1-94"/>
</dbReference>
<dbReference type="PDBsum" id="6IWV"/>
<dbReference type="PDBsum" id="6TYD"/>
<dbReference type="PDBsum" id="8HIB"/>
<dbReference type="SMR" id="P81877"/>
<dbReference type="BioGRID" id="117164">
    <property type="interactions" value="105"/>
</dbReference>
<dbReference type="DIP" id="DIP-29459N"/>
<dbReference type="FunCoup" id="P81877">
    <property type="interactions" value="3588"/>
</dbReference>
<dbReference type="IntAct" id="P81877">
    <property type="interactions" value="91"/>
</dbReference>
<dbReference type="MINT" id="P81877"/>
<dbReference type="STRING" id="9606.ENSP00000483921"/>
<dbReference type="GlyCosmos" id="P81877">
    <property type="glycosylation" value="3 sites, 1 glycan"/>
</dbReference>
<dbReference type="GlyGen" id="P81877">
    <property type="glycosylation" value="2 sites, 1 O-linked glycan (2 sites)"/>
</dbReference>
<dbReference type="iPTMnet" id="P81877"/>
<dbReference type="PhosphoSitePlus" id="P81877"/>
<dbReference type="BioMuta" id="SSBP2"/>
<dbReference type="DMDM" id="27734570"/>
<dbReference type="jPOST" id="P81877"/>
<dbReference type="MassIVE" id="P81877"/>
<dbReference type="PaxDb" id="9606-ENSP00000483921"/>
<dbReference type="PeptideAtlas" id="P81877"/>
<dbReference type="ProteomicsDB" id="14786"/>
<dbReference type="ProteomicsDB" id="19161"/>
<dbReference type="ProteomicsDB" id="19621"/>
<dbReference type="ProteomicsDB" id="57701">
    <molecule id="P81877-1"/>
</dbReference>
<dbReference type="ProteomicsDB" id="6338"/>
<dbReference type="Pumba" id="P81877"/>
<dbReference type="Antibodypedia" id="12817">
    <property type="antibodies" value="200 antibodies from 32 providers"/>
</dbReference>
<dbReference type="DNASU" id="23635"/>
<dbReference type="Ensembl" id="ENST00000320672.9">
    <molecule id="P81877-1"/>
    <property type="protein sequence ID" value="ENSP00000322977.4"/>
    <property type="gene ID" value="ENSG00000145687.17"/>
</dbReference>
<dbReference type="Ensembl" id="ENST00000505980.5">
    <molecule id="P81877-3"/>
    <property type="protein sequence ID" value="ENSP00000423969.1"/>
    <property type="gene ID" value="ENSG00000145687.17"/>
</dbReference>
<dbReference type="Ensembl" id="ENST00000509053.5">
    <molecule id="P81877-2"/>
    <property type="protein sequence ID" value="ENSP00000422961.1"/>
    <property type="gene ID" value="ENSG00000145687.17"/>
</dbReference>
<dbReference type="Ensembl" id="ENST00000514493.5">
    <molecule id="P81877-4"/>
    <property type="protein sequence ID" value="ENSP00000426183.1"/>
    <property type="gene ID" value="ENSG00000145687.17"/>
</dbReference>
<dbReference type="Ensembl" id="ENST00000515395.5">
    <molecule id="P81877-5"/>
    <property type="protein sequence ID" value="ENSP00000424657.1"/>
    <property type="gene ID" value="ENSG00000145687.17"/>
</dbReference>
<dbReference type="GeneID" id="23635"/>
<dbReference type="KEGG" id="hsa:23635"/>
<dbReference type="UCSC" id="uc003kho.5">
    <molecule id="P81877-1"/>
    <property type="organism name" value="human"/>
</dbReference>
<dbReference type="AGR" id="HGNC:15831"/>
<dbReference type="CTD" id="23635"/>
<dbReference type="DisGeNET" id="23635"/>
<dbReference type="GeneCards" id="SSBP2"/>
<dbReference type="HGNC" id="HGNC:15831">
    <property type="gene designation" value="SSBP2"/>
</dbReference>
<dbReference type="HPA" id="ENSG00000145687">
    <property type="expression patterns" value="Low tissue specificity"/>
</dbReference>
<dbReference type="MalaCards" id="SSBP2"/>
<dbReference type="MIM" id="607389">
    <property type="type" value="gene"/>
</dbReference>
<dbReference type="neXtProt" id="NX_P81877"/>
<dbReference type="OpenTargets" id="ENSG00000145687"/>
<dbReference type="PharmGKB" id="PA38046"/>
<dbReference type="VEuPathDB" id="HostDB:ENSG00000145687"/>
<dbReference type="eggNOG" id="KOG4594">
    <property type="taxonomic scope" value="Eukaryota"/>
</dbReference>
<dbReference type="GeneTree" id="ENSGT00950000183049"/>
<dbReference type="HOGENOM" id="CLU_053914_1_0_1"/>
<dbReference type="InParanoid" id="P81877"/>
<dbReference type="OMA" id="DSISKXY"/>
<dbReference type="OrthoDB" id="5600002at2759"/>
<dbReference type="PAN-GO" id="P81877">
    <property type="GO annotations" value="2 GO annotations based on evolutionary models"/>
</dbReference>
<dbReference type="PhylomeDB" id="P81877"/>
<dbReference type="TreeFam" id="TF318961"/>
<dbReference type="PathwayCommons" id="P81877"/>
<dbReference type="SignaLink" id="P81877"/>
<dbReference type="BioGRID-ORCS" id="23635">
    <property type="hits" value="11 hits in 1164 CRISPR screens"/>
</dbReference>
<dbReference type="ChiTaRS" id="SSBP2">
    <property type="organism name" value="human"/>
</dbReference>
<dbReference type="GeneWiki" id="SSBP2"/>
<dbReference type="GenomeRNAi" id="23635"/>
<dbReference type="Pharos" id="P81877">
    <property type="development level" value="Tbio"/>
</dbReference>
<dbReference type="PRO" id="PR:P81877"/>
<dbReference type="Proteomes" id="UP000005640">
    <property type="component" value="Chromosome 5"/>
</dbReference>
<dbReference type="RNAct" id="P81877">
    <property type="molecule type" value="protein"/>
</dbReference>
<dbReference type="Bgee" id="ENSG00000145687">
    <property type="expression patterns" value="Expressed in cortical plate and 208 other cell types or tissues"/>
</dbReference>
<dbReference type="ExpressionAtlas" id="P81877">
    <property type="expression patterns" value="baseline and differential"/>
</dbReference>
<dbReference type="GO" id="GO:0005737">
    <property type="term" value="C:cytoplasm"/>
    <property type="evidence" value="ECO:0000314"/>
    <property type="project" value="LIFEdb"/>
</dbReference>
<dbReference type="GO" id="GO:0005634">
    <property type="term" value="C:nucleus"/>
    <property type="evidence" value="ECO:0000318"/>
    <property type="project" value="GO_Central"/>
</dbReference>
<dbReference type="GO" id="GO:0003697">
    <property type="term" value="F:single-stranded DNA binding"/>
    <property type="evidence" value="ECO:0000303"/>
    <property type="project" value="UniProtKB"/>
</dbReference>
<dbReference type="GO" id="GO:0045944">
    <property type="term" value="P:positive regulation of transcription by RNA polymerase II"/>
    <property type="evidence" value="ECO:0000318"/>
    <property type="project" value="GO_Central"/>
</dbReference>
<dbReference type="GO" id="GO:0006355">
    <property type="term" value="P:regulation of DNA-templated transcription"/>
    <property type="evidence" value="ECO:0000303"/>
    <property type="project" value="UniProtKB"/>
</dbReference>
<dbReference type="InterPro" id="IPR006594">
    <property type="entry name" value="LisH"/>
</dbReference>
<dbReference type="InterPro" id="IPR008116">
    <property type="entry name" value="SSDP_DNA-bd"/>
</dbReference>
<dbReference type="PANTHER" id="PTHR12610">
    <property type="entry name" value="SINGLE STRANDED DNA BINDING PROTEIN"/>
    <property type="match status" value="1"/>
</dbReference>
<dbReference type="PANTHER" id="PTHR12610:SF23">
    <property type="entry name" value="SINGLE-STRANDED DNA-BINDING PROTEIN 2"/>
    <property type="match status" value="1"/>
</dbReference>
<dbReference type="Pfam" id="PF04503">
    <property type="entry name" value="SSDP"/>
    <property type="match status" value="2"/>
</dbReference>
<dbReference type="PRINTS" id="PR01743">
    <property type="entry name" value="SSDNABINDING"/>
</dbReference>
<dbReference type="SMART" id="SM00667">
    <property type="entry name" value="LisH"/>
    <property type="match status" value="1"/>
</dbReference>
<dbReference type="PROSITE" id="PS50896">
    <property type="entry name" value="LISH"/>
    <property type="match status" value="1"/>
</dbReference>
<proteinExistence type="evidence at protein level"/>